<protein>
    <recommendedName>
        <fullName evidence="1">A-type ATP synthase subunit F</fullName>
    </recommendedName>
</protein>
<feature type="chain" id="PRO_1000059430" description="A-type ATP synthase subunit F">
    <location>
        <begin position="1"/>
        <end position="100"/>
    </location>
</feature>
<dbReference type="EMBL" id="CP000559">
    <property type="protein sequence ID" value="ABN07390.1"/>
    <property type="molecule type" value="Genomic_DNA"/>
</dbReference>
<dbReference type="RefSeq" id="WP_011833593.1">
    <property type="nucleotide sequence ID" value="NC_008942.1"/>
</dbReference>
<dbReference type="SMR" id="A2SST4"/>
<dbReference type="STRING" id="410358.Mlab_1221"/>
<dbReference type="GeneID" id="4795979"/>
<dbReference type="KEGG" id="mla:Mlab_1221"/>
<dbReference type="eggNOG" id="arCOG04102">
    <property type="taxonomic scope" value="Archaea"/>
</dbReference>
<dbReference type="HOGENOM" id="CLU_135754_2_2_2"/>
<dbReference type="OrthoDB" id="24971at2157"/>
<dbReference type="Proteomes" id="UP000000365">
    <property type="component" value="Chromosome"/>
</dbReference>
<dbReference type="GO" id="GO:0005886">
    <property type="term" value="C:plasma membrane"/>
    <property type="evidence" value="ECO:0007669"/>
    <property type="project" value="UniProtKB-SubCell"/>
</dbReference>
<dbReference type="GO" id="GO:0005524">
    <property type="term" value="F:ATP binding"/>
    <property type="evidence" value="ECO:0007669"/>
    <property type="project" value="UniProtKB-UniRule"/>
</dbReference>
<dbReference type="GO" id="GO:0046933">
    <property type="term" value="F:proton-transporting ATP synthase activity, rotational mechanism"/>
    <property type="evidence" value="ECO:0007669"/>
    <property type="project" value="UniProtKB-UniRule"/>
</dbReference>
<dbReference type="GO" id="GO:0046961">
    <property type="term" value="F:proton-transporting ATPase activity, rotational mechanism"/>
    <property type="evidence" value="ECO:0007669"/>
    <property type="project" value="InterPro"/>
</dbReference>
<dbReference type="GO" id="GO:0042777">
    <property type="term" value="P:proton motive force-driven plasma membrane ATP synthesis"/>
    <property type="evidence" value="ECO:0007669"/>
    <property type="project" value="UniProtKB-UniRule"/>
</dbReference>
<dbReference type="Gene3D" id="3.40.50.10580">
    <property type="entry name" value="ATPase, V1 complex, subunit F"/>
    <property type="match status" value="1"/>
</dbReference>
<dbReference type="HAMAP" id="MF_00312">
    <property type="entry name" value="ATP_synth_F_arch"/>
    <property type="match status" value="1"/>
</dbReference>
<dbReference type="InterPro" id="IPR008218">
    <property type="entry name" value="ATPase_V1-cplx_f_g_su"/>
</dbReference>
<dbReference type="InterPro" id="IPR022944">
    <property type="entry name" value="ATPase_V1-cplx_fsu_bac/arc"/>
</dbReference>
<dbReference type="InterPro" id="IPR036906">
    <property type="entry name" value="ATPase_V1_fsu_sf"/>
</dbReference>
<dbReference type="NCBIfam" id="NF002577">
    <property type="entry name" value="PRK02228.1"/>
    <property type="match status" value="1"/>
</dbReference>
<dbReference type="Pfam" id="PF01990">
    <property type="entry name" value="ATP-synt_F"/>
    <property type="match status" value="1"/>
</dbReference>
<dbReference type="SUPFAM" id="SSF159468">
    <property type="entry name" value="AtpF-like"/>
    <property type="match status" value="1"/>
</dbReference>
<organism>
    <name type="scientific">Methanocorpusculum labreanum (strain ATCC 43576 / DSM 4855 / Z)</name>
    <dbReference type="NCBI Taxonomy" id="410358"/>
    <lineage>
        <taxon>Archaea</taxon>
        <taxon>Methanobacteriati</taxon>
        <taxon>Methanobacteriota</taxon>
        <taxon>Stenosarchaea group</taxon>
        <taxon>Methanomicrobia</taxon>
        <taxon>Methanomicrobiales</taxon>
        <taxon>Methanocorpusculaceae</taxon>
        <taxon>Methanocorpusculum</taxon>
    </lineage>
</organism>
<evidence type="ECO:0000255" key="1">
    <source>
        <dbReference type="HAMAP-Rule" id="MF_00312"/>
    </source>
</evidence>
<name>AATF_METLZ</name>
<accession>A2SST4</accession>
<gene>
    <name evidence="1" type="primary">atpF</name>
    <name type="ordered locus">Mlab_1221</name>
</gene>
<proteinExistence type="inferred from homology"/>
<sequence>MEIAVIGNKEFVLGFQLAGIKKTYSAENPEKLAETITKVLDDTNVGILVLQSTDLEQIPRRLQVIIENSVKPTIVTIGGQEAGLSLRERIKRSVGVDLWK</sequence>
<comment type="function">
    <text evidence="1">Component of the A-type ATP synthase that produces ATP from ADP in the presence of a proton gradient across the membrane.</text>
</comment>
<comment type="subunit">
    <text evidence="1">Has multiple subunits with at least A(3), B(3), C, D, E, F, H, I and proteolipid K(x).</text>
</comment>
<comment type="subcellular location">
    <subcellularLocation>
        <location evidence="1">Cell membrane</location>
        <topology evidence="1">Peripheral membrane protein</topology>
    </subcellularLocation>
</comment>
<comment type="similarity">
    <text evidence="1">Belongs to the V-ATPase F subunit family.</text>
</comment>
<keyword id="KW-0066">ATP synthesis</keyword>
<keyword id="KW-1003">Cell membrane</keyword>
<keyword id="KW-0375">Hydrogen ion transport</keyword>
<keyword id="KW-0406">Ion transport</keyword>
<keyword id="KW-0472">Membrane</keyword>
<keyword id="KW-1185">Reference proteome</keyword>
<keyword id="KW-0813">Transport</keyword>
<reference key="1">
    <citation type="journal article" date="2009" name="Stand. Genomic Sci.">
        <title>Complete genome sequence of Methanocorpusculum labreanum type strain Z.</title>
        <authorList>
            <person name="Anderson I.J."/>
            <person name="Sieprawska-Lupa M."/>
            <person name="Goltsman E."/>
            <person name="Lapidus A."/>
            <person name="Copeland A."/>
            <person name="Glavina Del Rio T."/>
            <person name="Tice H."/>
            <person name="Dalin E."/>
            <person name="Barry K."/>
            <person name="Pitluck S."/>
            <person name="Hauser L."/>
            <person name="Land M."/>
            <person name="Lucas S."/>
            <person name="Richardson P."/>
            <person name="Whitman W.B."/>
            <person name="Kyrpides N.C."/>
        </authorList>
    </citation>
    <scope>NUCLEOTIDE SEQUENCE [LARGE SCALE GENOMIC DNA]</scope>
    <source>
        <strain>ATCC 43576 / DSM 4855 / Z</strain>
    </source>
</reference>